<proteinExistence type="evidence at protein level"/>
<comment type="subcellular location">
    <subcellularLocation>
        <location evidence="4">Cell membrane</location>
        <topology evidence="4">Single-pass membrane protein</topology>
    </subcellularLocation>
</comment>
<comment type="alternative products">
    <event type="alternative splicing"/>
    <isoform>
        <id>P01882-1</id>
        <name>Membrane-bound</name>
        <sequence type="displayed"/>
    </isoform>
    <isoform>
        <id>P01881-1</id>
        <name>Secreted</name>
        <sequence type="external"/>
    </isoform>
</comment>
<comment type="tissue specificity">
    <text>Cell lines producing IgD contain several mRNA species for Ig delta chains. In plasmacytomas, the secreted form is the major component, and the membrane-bound form is a minor component. In spleen, however, the membrane-bound form is the major component. These two forms differ in their C-terminal segments.</text>
</comment>
<comment type="miscellaneous">
    <text>The sequence of residues 1-237 is assumed to be identical with that of the secreted form.</text>
</comment>
<protein>
    <recommendedName>
        <fullName>Ig delta chain C region membrane-bound form</fullName>
    </recommendedName>
</protein>
<evidence type="ECO:0000255" key="1"/>
<evidence type="ECO:0000255" key="2">
    <source>
        <dbReference type="PROSITE-ProRule" id="PRU00114"/>
    </source>
</evidence>
<evidence type="ECO:0000256" key="3">
    <source>
        <dbReference type="SAM" id="MobiDB-lite"/>
    </source>
</evidence>
<evidence type="ECO:0000305" key="4"/>
<dbReference type="EMBL" id="J00447">
    <property type="protein sequence ID" value="AAB59654.1"/>
    <property type="molecule type" value="Genomic_DNA"/>
</dbReference>
<dbReference type="EMBL" id="J00448">
    <property type="protein sequence ID" value="AAB59654.1"/>
    <property type="status" value="JOINED"/>
    <property type="molecule type" value="Genomic_DNA"/>
</dbReference>
<dbReference type="EMBL" id="J00449">
    <property type="protein sequence ID" value="AAB59654.1"/>
    <property type="status" value="JOINED"/>
    <property type="molecule type" value="Genomic_DNA"/>
</dbReference>
<dbReference type="EMBL" id="J00450">
    <property type="protein sequence ID" value="AAB59654.1"/>
    <property type="status" value="JOINED"/>
    <property type="molecule type" value="Genomic_DNA"/>
</dbReference>
<dbReference type="PIR" id="A02177">
    <property type="entry name" value="DHMSM"/>
</dbReference>
<dbReference type="SMR" id="P01882"/>
<dbReference type="FunCoup" id="P01882">
    <property type="interactions" value="5"/>
</dbReference>
<dbReference type="IntAct" id="P01882">
    <property type="interactions" value="4"/>
</dbReference>
<dbReference type="GlyGen" id="P01882">
    <property type="glycosylation" value="6 sites, 1 O-linked glycan (1 site)"/>
</dbReference>
<dbReference type="UCSC" id="uc007pgq.1">
    <molecule id="P01882-1"/>
    <property type="organism name" value="mouse"/>
</dbReference>
<dbReference type="InParanoid" id="P01882"/>
<dbReference type="Proteomes" id="UP000000589">
    <property type="component" value="Unplaced"/>
</dbReference>
<dbReference type="RNAct" id="P01882">
    <property type="molecule type" value="protein"/>
</dbReference>
<dbReference type="GO" id="GO:0005886">
    <property type="term" value="C:plasma membrane"/>
    <property type="evidence" value="ECO:0000304"/>
    <property type="project" value="Reactome"/>
</dbReference>
<dbReference type="FunFam" id="2.60.40.10:FF:002428">
    <property type="entry name" value="Immunoglobulin heavy constant delta"/>
    <property type="match status" value="1"/>
</dbReference>
<dbReference type="Gene3D" id="2.60.40.10">
    <property type="entry name" value="Immunoglobulins"/>
    <property type="match status" value="2"/>
</dbReference>
<dbReference type="InterPro" id="IPR007110">
    <property type="entry name" value="Ig-like_dom"/>
</dbReference>
<dbReference type="InterPro" id="IPR036179">
    <property type="entry name" value="Ig-like_dom_sf"/>
</dbReference>
<dbReference type="InterPro" id="IPR013783">
    <property type="entry name" value="Ig-like_fold"/>
</dbReference>
<dbReference type="InterPro" id="IPR003006">
    <property type="entry name" value="Ig/MHC_CS"/>
</dbReference>
<dbReference type="InterPro" id="IPR003597">
    <property type="entry name" value="Ig_C1-set"/>
</dbReference>
<dbReference type="InterPro" id="IPR050380">
    <property type="entry name" value="Immune_Resp_Modulators"/>
</dbReference>
<dbReference type="PANTHER" id="PTHR23411">
    <property type="entry name" value="TAPASIN"/>
    <property type="match status" value="1"/>
</dbReference>
<dbReference type="Pfam" id="PF07654">
    <property type="entry name" value="C1-set"/>
    <property type="match status" value="1"/>
</dbReference>
<dbReference type="SMART" id="SM00407">
    <property type="entry name" value="IGc1"/>
    <property type="match status" value="1"/>
</dbReference>
<dbReference type="SUPFAM" id="SSF48726">
    <property type="entry name" value="Immunoglobulin"/>
    <property type="match status" value="2"/>
</dbReference>
<dbReference type="PROSITE" id="PS50835">
    <property type="entry name" value="IG_LIKE"/>
    <property type="match status" value="2"/>
</dbReference>
<dbReference type="PROSITE" id="PS00290">
    <property type="entry name" value="IG_MHC"/>
    <property type="match status" value="1"/>
</dbReference>
<name>IGHDM_MOUSE</name>
<reference key="1">
    <citation type="journal article" date="1980" name="Science">
        <title>Mouse immunoglobulin D: messenger RNA and genomic DNA sequences.</title>
        <authorList>
            <person name="Tucker P.W."/>
            <person name="Liu C.-P."/>
            <person name="Mushinski J.F."/>
            <person name="Blattner F.R."/>
        </authorList>
    </citation>
    <scope>NUCLEOTIDE SEQUENCE [GENOMIC DNA]</scope>
</reference>
<reference key="2">
    <citation type="journal article" date="1982" name="Nature">
        <title>Structure of genes for membrane and secreted murine IgD heavy chains.</title>
        <authorList>
            <person name="Cheng H.-L."/>
            <person name="Blattner F.R."/>
            <person name="Fitzmaurice L."/>
            <person name="Mushinski J.F."/>
            <person name="Tucker P.W."/>
        </authorList>
    </citation>
    <scope>NUCLEOTIDE SEQUENCE [GENOMIC DNA] OF 237-290</scope>
</reference>
<reference key="3">
    <citation type="journal article" date="2010" name="Cell">
        <title>A tissue-specific atlas of mouse protein phosphorylation and expression.</title>
        <authorList>
            <person name="Huttlin E.L."/>
            <person name="Jedrychowski M.P."/>
            <person name="Elias J.E."/>
            <person name="Goswami T."/>
            <person name="Rad R."/>
            <person name="Beausoleil S.A."/>
            <person name="Villen J."/>
            <person name="Haas W."/>
            <person name="Sowa M.E."/>
            <person name="Gygi S.P."/>
        </authorList>
    </citation>
    <scope>IDENTIFICATION BY MASS SPECTROMETRY [LARGE SCALE ANALYSIS]</scope>
    <source>
        <tissue>Spleen</tissue>
    </source>
</reference>
<feature type="chain" id="PRO_0000153572" description="Ig delta chain C region membrane-bound form">
    <location>
        <begin position="1" status="less than"/>
        <end position="290"/>
    </location>
</feature>
<feature type="transmembrane region" description="Helical" evidence="1">
    <location>
        <begin position="262"/>
        <end position="279"/>
    </location>
</feature>
<feature type="topological domain" description="Cytoplasmic" evidence="1">
    <location>
        <begin position="280"/>
        <end position="290"/>
    </location>
</feature>
<feature type="domain" description="Ig-like 1">
    <location>
        <begin position="5"/>
        <end position="105"/>
    </location>
</feature>
<feature type="domain" description="Ig-like 2">
    <location>
        <begin position="133"/>
        <end position="233"/>
    </location>
</feature>
<feature type="region of interest" description="Disordered" evidence="3">
    <location>
        <begin position="89"/>
        <end position="111"/>
    </location>
</feature>
<feature type="compositionally biased region" description="Polar residues" evidence="3">
    <location>
        <begin position="96"/>
        <end position="111"/>
    </location>
</feature>
<feature type="glycosylation site" description="N-linked (GlcNAc...) asparagine" evidence="1">
    <location>
        <position position="58"/>
    </location>
</feature>
<feature type="glycosylation site" description="N-linked (GlcNAc...) asparagine" evidence="1">
    <location>
        <position position="75"/>
    </location>
</feature>
<feature type="glycosylation site" description="N-linked (GlcNAc...) asparagine" evidence="1">
    <location>
        <position position="112"/>
    </location>
</feature>
<feature type="glycosylation site" description="N-linked (GlcNAc...) asparagine" evidence="1">
    <location>
        <position position="135"/>
    </location>
</feature>
<feature type="glycosylation site" description="N-linked (GlcNAc...) asparagine" evidence="1">
    <location>
        <position position="227"/>
    </location>
</feature>
<feature type="disulfide bond" description="Interchain (with light chain)" evidence="2">
    <location>
        <position position="13"/>
    </location>
</feature>
<feature type="disulfide bond" evidence="2">
    <location>
        <begin position="26"/>
        <end position="78"/>
    </location>
</feature>
<feature type="disulfide bond" description="Interchain (with heavy chain)" evidence="2">
    <location>
        <position position="155"/>
    </location>
</feature>
<feature type="non-terminal residue">
    <location>
        <position position="1"/>
    </location>
</feature>
<sequence length="290" mass="32353">DKKEPDMFLLSECKAPEENEKINLGCLVIGSQPLKISWEPKKSSIVEHVFPSEMRNGNYTMVLQVTVLASELNLNHTCTINKPKRKEKPFKFPESWDSQSSKRVTPTLQAKNHSTEATKAITTKKDIEGAMAPSNLTVNILTTSTHPEMSSWLLCEVSGFFPENIHLMWLGVHSKMKSTNFVTANPTAQPGGTFQTWSVLRLPVALSSSLDTYTCVVEHEASKTKLNASKSLAISGIVNTIQHSCIMDEQSDSYMDLEEENGLWPTMCTFVALFLLTLLYSGFVTFIKVK</sequence>
<accession>P01882</accession>
<organism>
    <name type="scientific">Mus musculus</name>
    <name type="common">Mouse</name>
    <dbReference type="NCBI Taxonomy" id="10090"/>
    <lineage>
        <taxon>Eukaryota</taxon>
        <taxon>Metazoa</taxon>
        <taxon>Chordata</taxon>
        <taxon>Craniata</taxon>
        <taxon>Vertebrata</taxon>
        <taxon>Euteleostomi</taxon>
        <taxon>Mammalia</taxon>
        <taxon>Eutheria</taxon>
        <taxon>Euarchontoglires</taxon>
        <taxon>Glires</taxon>
        <taxon>Rodentia</taxon>
        <taxon>Myomorpha</taxon>
        <taxon>Muroidea</taxon>
        <taxon>Muridae</taxon>
        <taxon>Murinae</taxon>
        <taxon>Mus</taxon>
        <taxon>Mus</taxon>
    </lineage>
</organism>
<keyword id="KW-0025">Alternative splicing</keyword>
<keyword id="KW-1003">Cell membrane</keyword>
<keyword id="KW-1015">Disulfide bond</keyword>
<keyword id="KW-0325">Glycoprotein</keyword>
<keyword id="KW-0393">Immunoglobulin domain</keyword>
<keyword id="KW-0472">Membrane</keyword>
<keyword id="KW-1185">Reference proteome</keyword>
<keyword id="KW-0677">Repeat</keyword>
<keyword id="KW-0812">Transmembrane</keyword>
<keyword id="KW-1133">Transmembrane helix</keyword>